<accession>Q4JT54</accession>
<comment type="function">
    <text evidence="1">Binds 23S rRNA and is also seen to make contacts with the A and possibly P site tRNAs.</text>
</comment>
<comment type="subunit">
    <text evidence="1">Part of the 50S ribosomal subunit.</text>
</comment>
<comment type="similarity">
    <text evidence="1">Belongs to the universal ribosomal protein uL16 family.</text>
</comment>
<sequence>MLIPKRVKYRRQHRPHRSGVSKGGNRVTFGDYGLQALEPTYITNRQIESARIAINRHMKRGGKVWINIFPDRPLTQKPLGVRMGSGKGPVEKWVANVKPGRILFEASYPNEEVALEALRRAGNKLPCKVRIVKKEDQF</sequence>
<proteinExistence type="inferred from homology"/>
<feature type="chain" id="PRO_0000062088" description="Large ribosomal subunit protein uL16">
    <location>
        <begin position="1"/>
        <end position="138"/>
    </location>
</feature>
<feature type="region of interest" description="Disordered" evidence="2">
    <location>
        <begin position="1"/>
        <end position="24"/>
    </location>
</feature>
<feature type="compositionally biased region" description="Basic residues" evidence="2">
    <location>
        <begin position="1"/>
        <end position="19"/>
    </location>
</feature>
<organism>
    <name type="scientific">Corynebacterium jeikeium (strain K411)</name>
    <dbReference type="NCBI Taxonomy" id="306537"/>
    <lineage>
        <taxon>Bacteria</taxon>
        <taxon>Bacillati</taxon>
        <taxon>Actinomycetota</taxon>
        <taxon>Actinomycetes</taxon>
        <taxon>Mycobacteriales</taxon>
        <taxon>Corynebacteriaceae</taxon>
        <taxon>Corynebacterium</taxon>
    </lineage>
</organism>
<name>RL16_CORJK</name>
<reference key="1">
    <citation type="journal article" date="2005" name="J. Bacteriol.">
        <title>Complete genome sequence and analysis of the multiresistant nosocomial pathogen Corynebacterium jeikeium K411, a lipid-requiring bacterium of the human skin flora.</title>
        <authorList>
            <person name="Tauch A."/>
            <person name="Kaiser O."/>
            <person name="Hain T."/>
            <person name="Goesmann A."/>
            <person name="Weisshaar B."/>
            <person name="Albersmeier A."/>
            <person name="Bekel T."/>
            <person name="Bischoff N."/>
            <person name="Brune I."/>
            <person name="Chakraborty T."/>
            <person name="Kalinowski J."/>
            <person name="Meyer F."/>
            <person name="Rupp O."/>
            <person name="Schneiker S."/>
            <person name="Viehoever P."/>
            <person name="Puehler A."/>
        </authorList>
    </citation>
    <scope>NUCLEOTIDE SEQUENCE [LARGE SCALE GENOMIC DNA]</scope>
    <source>
        <strain>K411</strain>
    </source>
</reference>
<keyword id="KW-1185">Reference proteome</keyword>
<keyword id="KW-0687">Ribonucleoprotein</keyword>
<keyword id="KW-0689">Ribosomal protein</keyword>
<keyword id="KW-0694">RNA-binding</keyword>
<keyword id="KW-0699">rRNA-binding</keyword>
<keyword id="KW-0820">tRNA-binding</keyword>
<gene>
    <name evidence="1" type="primary">rplP</name>
    <name type="ordered locus">jk1826</name>
</gene>
<evidence type="ECO:0000255" key="1">
    <source>
        <dbReference type="HAMAP-Rule" id="MF_01342"/>
    </source>
</evidence>
<evidence type="ECO:0000256" key="2">
    <source>
        <dbReference type="SAM" id="MobiDB-lite"/>
    </source>
</evidence>
<evidence type="ECO:0000305" key="3"/>
<dbReference type="EMBL" id="CR931997">
    <property type="protein sequence ID" value="CAI38003.1"/>
    <property type="molecule type" value="Genomic_DNA"/>
</dbReference>
<dbReference type="RefSeq" id="WP_011274163.1">
    <property type="nucleotide sequence ID" value="NC_007164.1"/>
</dbReference>
<dbReference type="SMR" id="Q4JT54"/>
<dbReference type="STRING" id="306537.jk1826"/>
<dbReference type="KEGG" id="cjk:jk1826"/>
<dbReference type="PATRIC" id="fig|306537.10.peg.1849"/>
<dbReference type="eggNOG" id="COG0197">
    <property type="taxonomic scope" value="Bacteria"/>
</dbReference>
<dbReference type="HOGENOM" id="CLU_078858_2_1_11"/>
<dbReference type="OrthoDB" id="9802589at2"/>
<dbReference type="Proteomes" id="UP000000545">
    <property type="component" value="Chromosome"/>
</dbReference>
<dbReference type="GO" id="GO:0022625">
    <property type="term" value="C:cytosolic large ribosomal subunit"/>
    <property type="evidence" value="ECO:0007669"/>
    <property type="project" value="TreeGrafter"/>
</dbReference>
<dbReference type="GO" id="GO:0019843">
    <property type="term" value="F:rRNA binding"/>
    <property type="evidence" value="ECO:0007669"/>
    <property type="project" value="UniProtKB-UniRule"/>
</dbReference>
<dbReference type="GO" id="GO:0003735">
    <property type="term" value="F:structural constituent of ribosome"/>
    <property type="evidence" value="ECO:0007669"/>
    <property type="project" value="InterPro"/>
</dbReference>
<dbReference type="GO" id="GO:0000049">
    <property type="term" value="F:tRNA binding"/>
    <property type="evidence" value="ECO:0007669"/>
    <property type="project" value="UniProtKB-KW"/>
</dbReference>
<dbReference type="GO" id="GO:0006412">
    <property type="term" value="P:translation"/>
    <property type="evidence" value="ECO:0007669"/>
    <property type="project" value="UniProtKB-UniRule"/>
</dbReference>
<dbReference type="CDD" id="cd01433">
    <property type="entry name" value="Ribosomal_L16_L10e"/>
    <property type="match status" value="1"/>
</dbReference>
<dbReference type="FunFam" id="3.90.1170.10:FF:000001">
    <property type="entry name" value="50S ribosomal protein L16"/>
    <property type="match status" value="1"/>
</dbReference>
<dbReference type="Gene3D" id="3.90.1170.10">
    <property type="entry name" value="Ribosomal protein L10e/L16"/>
    <property type="match status" value="1"/>
</dbReference>
<dbReference type="HAMAP" id="MF_01342">
    <property type="entry name" value="Ribosomal_uL16"/>
    <property type="match status" value="1"/>
</dbReference>
<dbReference type="InterPro" id="IPR047873">
    <property type="entry name" value="Ribosomal_uL16"/>
</dbReference>
<dbReference type="InterPro" id="IPR000114">
    <property type="entry name" value="Ribosomal_uL16_bact-type"/>
</dbReference>
<dbReference type="InterPro" id="IPR020798">
    <property type="entry name" value="Ribosomal_uL16_CS"/>
</dbReference>
<dbReference type="InterPro" id="IPR016180">
    <property type="entry name" value="Ribosomal_uL16_dom"/>
</dbReference>
<dbReference type="InterPro" id="IPR036920">
    <property type="entry name" value="Ribosomal_uL16_sf"/>
</dbReference>
<dbReference type="NCBIfam" id="TIGR01164">
    <property type="entry name" value="rplP_bact"/>
    <property type="match status" value="1"/>
</dbReference>
<dbReference type="PANTHER" id="PTHR12220">
    <property type="entry name" value="50S/60S RIBOSOMAL PROTEIN L16"/>
    <property type="match status" value="1"/>
</dbReference>
<dbReference type="PANTHER" id="PTHR12220:SF13">
    <property type="entry name" value="LARGE RIBOSOMAL SUBUNIT PROTEIN UL16M"/>
    <property type="match status" value="1"/>
</dbReference>
<dbReference type="Pfam" id="PF00252">
    <property type="entry name" value="Ribosomal_L16"/>
    <property type="match status" value="1"/>
</dbReference>
<dbReference type="PRINTS" id="PR00060">
    <property type="entry name" value="RIBOSOMALL16"/>
</dbReference>
<dbReference type="SUPFAM" id="SSF54686">
    <property type="entry name" value="Ribosomal protein L16p/L10e"/>
    <property type="match status" value="1"/>
</dbReference>
<dbReference type="PROSITE" id="PS00586">
    <property type="entry name" value="RIBOSOMAL_L16_1"/>
    <property type="match status" value="1"/>
</dbReference>
<dbReference type="PROSITE" id="PS00701">
    <property type="entry name" value="RIBOSOMAL_L16_2"/>
    <property type="match status" value="1"/>
</dbReference>
<protein>
    <recommendedName>
        <fullName evidence="1">Large ribosomal subunit protein uL16</fullName>
    </recommendedName>
    <alternativeName>
        <fullName evidence="3">50S ribosomal protein L16</fullName>
    </alternativeName>
</protein>